<accession>B5R6S6</accession>
<proteinExistence type="inferred from homology"/>
<gene>
    <name evidence="1" type="primary">thiI</name>
    <name type="ordered locus">SG0436</name>
</gene>
<dbReference type="EC" id="2.8.1.4" evidence="1"/>
<dbReference type="EMBL" id="AM933173">
    <property type="protein sequence ID" value="CAR36335.1"/>
    <property type="molecule type" value="Genomic_DNA"/>
</dbReference>
<dbReference type="RefSeq" id="WP_000668651.1">
    <property type="nucleotide sequence ID" value="NC_011274.1"/>
</dbReference>
<dbReference type="SMR" id="B5R6S6"/>
<dbReference type="KEGG" id="seg:SG0436"/>
<dbReference type="HOGENOM" id="CLU_037952_4_1_6"/>
<dbReference type="UniPathway" id="UPA00060"/>
<dbReference type="Proteomes" id="UP000008321">
    <property type="component" value="Chromosome"/>
</dbReference>
<dbReference type="GO" id="GO:0005829">
    <property type="term" value="C:cytosol"/>
    <property type="evidence" value="ECO:0007669"/>
    <property type="project" value="TreeGrafter"/>
</dbReference>
<dbReference type="GO" id="GO:0005524">
    <property type="term" value="F:ATP binding"/>
    <property type="evidence" value="ECO:0007669"/>
    <property type="project" value="UniProtKB-UniRule"/>
</dbReference>
<dbReference type="GO" id="GO:0004810">
    <property type="term" value="F:CCA tRNA nucleotidyltransferase activity"/>
    <property type="evidence" value="ECO:0007669"/>
    <property type="project" value="InterPro"/>
</dbReference>
<dbReference type="GO" id="GO:0000049">
    <property type="term" value="F:tRNA binding"/>
    <property type="evidence" value="ECO:0007669"/>
    <property type="project" value="UniProtKB-UniRule"/>
</dbReference>
<dbReference type="GO" id="GO:0140741">
    <property type="term" value="F:tRNA-uracil-4 sulfurtransferase activity"/>
    <property type="evidence" value="ECO:0007669"/>
    <property type="project" value="UniProtKB-EC"/>
</dbReference>
<dbReference type="GO" id="GO:0009228">
    <property type="term" value="P:thiamine biosynthetic process"/>
    <property type="evidence" value="ECO:0007669"/>
    <property type="project" value="UniProtKB-KW"/>
</dbReference>
<dbReference type="GO" id="GO:0009229">
    <property type="term" value="P:thiamine diphosphate biosynthetic process"/>
    <property type="evidence" value="ECO:0007669"/>
    <property type="project" value="UniProtKB-UniRule"/>
</dbReference>
<dbReference type="GO" id="GO:0052837">
    <property type="term" value="P:thiazole biosynthetic process"/>
    <property type="evidence" value="ECO:0007669"/>
    <property type="project" value="InterPro"/>
</dbReference>
<dbReference type="GO" id="GO:0002937">
    <property type="term" value="P:tRNA 4-thiouridine biosynthesis"/>
    <property type="evidence" value="ECO:0007669"/>
    <property type="project" value="TreeGrafter"/>
</dbReference>
<dbReference type="CDD" id="cd01712">
    <property type="entry name" value="PPase_ThiI"/>
    <property type="match status" value="1"/>
</dbReference>
<dbReference type="CDD" id="cd00158">
    <property type="entry name" value="RHOD"/>
    <property type="match status" value="1"/>
</dbReference>
<dbReference type="CDD" id="cd11716">
    <property type="entry name" value="THUMP_ThiI"/>
    <property type="match status" value="1"/>
</dbReference>
<dbReference type="FunFam" id="3.30.2130.30:FF:000002">
    <property type="entry name" value="tRNA sulfurtransferase"/>
    <property type="match status" value="1"/>
</dbReference>
<dbReference type="FunFam" id="3.40.250.10:FF:000003">
    <property type="entry name" value="tRNA sulfurtransferase"/>
    <property type="match status" value="1"/>
</dbReference>
<dbReference type="FunFam" id="3.40.50.620:FF:000029">
    <property type="entry name" value="tRNA sulfurtransferase"/>
    <property type="match status" value="1"/>
</dbReference>
<dbReference type="Gene3D" id="3.30.2130.30">
    <property type="match status" value="1"/>
</dbReference>
<dbReference type="Gene3D" id="3.40.50.620">
    <property type="entry name" value="HUPs"/>
    <property type="match status" value="1"/>
</dbReference>
<dbReference type="Gene3D" id="3.40.250.10">
    <property type="entry name" value="Rhodanese-like domain"/>
    <property type="match status" value="1"/>
</dbReference>
<dbReference type="HAMAP" id="MF_00021">
    <property type="entry name" value="ThiI"/>
    <property type="match status" value="1"/>
</dbReference>
<dbReference type="InterPro" id="IPR001763">
    <property type="entry name" value="Rhodanese-like_dom"/>
</dbReference>
<dbReference type="InterPro" id="IPR036873">
    <property type="entry name" value="Rhodanese-like_dom_sf"/>
</dbReference>
<dbReference type="InterPro" id="IPR014729">
    <property type="entry name" value="Rossmann-like_a/b/a_fold"/>
</dbReference>
<dbReference type="InterPro" id="IPR020536">
    <property type="entry name" value="ThiI_AANH"/>
</dbReference>
<dbReference type="InterPro" id="IPR054173">
    <property type="entry name" value="ThiI_fer"/>
</dbReference>
<dbReference type="InterPro" id="IPR049961">
    <property type="entry name" value="ThiI_N"/>
</dbReference>
<dbReference type="InterPro" id="IPR026340">
    <property type="entry name" value="THII_Thiazole_biosynth_dom"/>
</dbReference>
<dbReference type="InterPro" id="IPR004114">
    <property type="entry name" value="THUMP_dom"/>
</dbReference>
<dbReference type="InterPro" id="IPR049962">
    <property type="entry name" value="THUMP_ThiI"/>
</dbReference>
<dbReference type="InterPro" id="IPR003720">
    <property type="entry name" value="tRNA_STrfase"/>
</dbReference>
<dbReference type="InterPro" id="IPR050102">
    <property type="entry name" value="tRNA_sulfurtransferase_ThiI"/>
</dbReference>
<dbReference type="NCBIfam" id="TIGR04271">
    <property type="entry name" value="ThiI_C_thiazole"/>
    <property type="match status" value="1"/>
</dbReference>
<dbReference type="NCBIfam" id="TIGR00342">
    <property type="entry name" value="tRNA uracil 4-sulfurtransferase ThiI"/>
    <property type="match status" value="1"/>
</dbReference>
<dbReference type="PANTHER" id="PTHR43209">
    <property type="entry name" value="TRNA SULFURTRANSFERASE"/>
    <property type="match status" value="1"/>
</dbReference>
<dbReference type="PANTHER" id="PTHR43209:SF1">
    <property type="entry name" value="TRNA SULFURTRANSFERASE"/>
    <property type="match status" value="1"/>
</dbReference>
<dbReference type="Pfam" id="PF02568">
    <property type="entry name" value="ThiI"/>
    <property type="match status" value="1"/>
</dbReference>
<dbReference type="Pfam" id="PF22025">
    <property type="entry name" value="ThiI_fer"/>
    <property type="match status" value="1"/>
</dbReference>
<dbReference type="Pfam" id="PF02926">
    <property type="entry name" value="THUMP"/>
    <property type="match status" value="1"/>
</dbReference>
<dbReference type="SMART" id="SM00981">
    <property type="entry name" value="THUMP"/>
    <property type="match status" value="1"/>
</dbReference>
<dbReference type="SUPFAM" id="SSF52402">
    <property type="entry name" value="Adenine nucleotide alpha hydrolases-like"/>
    <property type="match status" value="1"/>
</dbReference>
<dbReference type="SUPFAM" id="SSF52821">
    <property type="entry name" value="Rhodanese/Cell cycle control phosphatase"/>
    <property type="match status" value="1"/>
</dbReference>
<dbReference type="SUPFAM" id="SSF143437">
    <property type="entry name" value="THUMP domain-like"/>
    <property type="match status" value="1"/>
</dbReference>
<dbReference type="PROSITE" id="PS50206">
    <property type="entry name" value="RHODANESE_3"/>
    <property type="match status" value="1"/>
</dbReference>
<dbReference type="PROSITE" id="PS51165">
    <property type="entry name" value="THUMP"/>
    <property type="match status" value="1"/>
</dbReference>
<sequence>MKFIIKLFPEITIKSQSVRLRFIKILTGNIRNVLKHYDETLAVVRHWDNIEVRAKDENQRLAIRDALTRIPGIHHILEVEDVPFTDMHDIFEKALAQYREQLEGKTFCVRVKRRGKHEFSSIEVERYVGGGLNQHIESARVKLTNPDVTVHLEVEDDRLLLIKGRYEGIGGFPIGTQEDVLSLISGGFDSGVSSYMLMRRGCRVHYCFFNLGGAAHEIGVRQVAHYLWNRFGSSHRVRFVAINFEPVVGEILEKVDDGQMGVVLKRMMVRAASKVAERYGVQALVTGEALGQVSSQTLTNLRLIDNVSDTLILRPLISYDKEHIINLARQIGTEDFARTMPEYCGVISKSPTVKAIKAKIEAEEENFDFSILDKVVEEANNVDIREIAQQTQQEVVEVETVSGFGPNDVILDIRSVDEQDDKPLKVEGVDVVSLPFYKLSTKFGDLDQSKTWLLWCERGVMSRLQALYLREQGFENVKAYRP</sequence>
<keyword id="KW-0067">ATP-binding</keyword>
<keyword id="KW-0963">Cytoplasm</keyword>
<keyword id="KW-1015">Disulfide bond</keyword>
<keyword id="KW-0547">Nucleotide-binding</keyword>
<keyword id="KW-0676">Redox-active center</keyword>
<keyword id="KW-0694">RNA-binding</keyword>
<keyword id="KW-0784">Thiamine biosynthesis</keyword>
<keyword id="KW-0808">Transferase</keyword>
<keyword id="KW-0820">tRNA-binding</keyword>
<evidence type="ECO:0000255" key="1">
    <source>
        <dbReference type="HAMAP-Rule" id="MF_00021"/>
    </source>
</evidence>
<reference key="1">
    <citation type="journal article" date="2008" name="Genome Res.">
        <title>Comparative genome analysis of Salmonella enteritidis PT4 and Salmonella gallinarum 287/91 provides insights into evolutionary and host adaptation pathways.</title>
        <authorList>
            <person name="Thomson N.R."/>
            <person name="Clayton D.J."/>
            <person name="Windhorst D."/>
            <person name="Vernikos G."/>
            <person name="Davidson S."/>
            <person name="Churcher C."/>
            <person name="Quail M.A."/>
            <person name="Stevens M."/>
            <person name="Jones M.A."/>
            <person name="Watson M."/>
            <person name="Barron A."/>
            <person name="Layton A."/>
            <person name="Pickard D."/>
            <person name="Kingsley R.A."/>
            <person name="Bignell A."/>
            <person name="Clark L."/>
            <person name="Harris B."/>
            <person name="Ormond D."/>
            <person name="Abdellah Z."/>
            <person name="Brooks K."/>
            <person name="Cherevach I."/>
            <person name="Chillingworth T."/>
            <person name="Woodward J."/>
            <person name="Norberczak H."/>
            <person name="Lord A."/>
            <person name="Arrowsmith C."/>
            <person name="Jagels K."/>
            <person name="Moule S."/>
            <person name="Mungall K."/>
            <person name="Saunders M."/>
            <person name="Whitehead S."/>
            <person name="Chabalgoity J.A."/>
            <person name="Maskell D."/>
            <person name="Humphreys T."/>
            <person name="Roberts M."/>
            <person name="Barrow P.A."/>
            <person name="Dougan G."/>
            <person name="Parkhill J."/>
        </authorList>
    </citation>
    <scope>NUCLEOTIDE SEQUENCE [LARGE SCALE GENOMIC DNA]</scope>
    <source>
        <strain>287/91 / NCTC 13346</strain>
    </source>
</reference>
<comment type="function">
    <text evidence="1">Catalyzes the ATP-dependent transfer of a sulfur to tRNA to produce 4-thiouridine in position 8 of tRNAs, which functions as a near-UV photosensor. Also catalyzes the transfer of sulfur to the sulfur carrier protein ThiS, forming ThiS-thiocarboxylate. This is a step in the synthesis of thiazole, in the thiamine biosynthesis pathway. The sulfur is donated as persulfide by IscS.</text>
</comment>
<comment type="catalytic activity">
    <reaction evidence="1">
        <text>[ThiI sulfur-carrier protein]-S-sulfanyl-L-cysteine + a uridine in tRNA + 2 reduced [2Fe-2S]-[ferredoxin] + ATP + H(+) = [ThiI sulfur-carrier protein]-L-cysteine + a 4-thiouridine in tRNA + 2 oxidized [2Fe-2S]-[ferredoxin] + AMP + diphosphate</text>
        <dbReference type="Rhea" id="RHEA:24176"/>
        <dbReference type="Rhea" id="RHEA-COMP:10000"/>
        <dbReference type="Rhea" id="RHEA-COMP:10001"/>
        <dbReference type="Rhea" id="RHEA-COMP:13337"/>
        <dbReference type="Rhea" id="RHEA-COMP:13338"/>
        <dbReference type="Rhea" id="RHEA-COMP:13339"/>
        <dbReference type="Rhea" id="RHEA-COMP:13340"/>
        <dbReference type="ChEBI" id="CHEBI:15378"/>
        <dbReference type="ChEBI" id="CHEBI:29950"/>
        <dbReference type="ChEBI" id="CHEBI:30616"/>
        <dbReference type="ChEBI" id="CHEBI:33019"/>
        <dbReference type="ChEBI" id="CHEBI:33737"/>
        <dbReference type="ChEBI" id="CHEBI:33738"/>
        <dbReference type="ChEBI" id="CHEBI:61963"/>
        <dbReference type="ChEBI" id="CHEBI:65315"/>
        <dbReference type="ChEBI" id="CHEBI:136798"/>
        <dbReference type="ChEBI" id="CHEBI:456215"/>
        <dbReference type="EC" id="2.8.1.4"/>
    </reaction>
</comment>
<comment type="catalytic activity">
    <reaction evidence="1">
        <text>[ThiS sulfur-carrier protein]-C-terminal Gly-Gly-AMP + S-sulfanyl-L-cysteinyl-[cysteine desulfurase] + AH2 = [ThiS sulfur-carrier protein]-C-terminal-Gly-aminoethanethioate + L-cysteinyl-[cysteine desulfurase] + A + AMP + 2 H(+)</text>
        <dbReference type="Rhea" id="RHEA:43340"/>
        <dbReference type="Rhea" id="RHEA-COMP:12157"/>
        <dbReference type="Rhea" id="RHEA-COMP:12158"/>
        <dbReference type="Rhea" id="RHEA-COMP:12910"/>
        <dbReference type="Rhea" id="RHEA-COMP:19908"/>
        <dbReference type="ChEBI" id="CHEBI:13193"/>
        <dbReference type="ChEBI" id="CHEBI:15378"/>
        <dbReference type="ChEBI" id="CHEBI:17499"/>
        <dbReference type="ChEBI" id="CHEBI:29950"/>
        <dbReference type="ChEBI" id="CHEBI:61963"/>
        <dbReference type="ChEBI" id="CHEBI:90618"/>
        <dbReference type="ChEBI" id="CHEBI:232372"/>
        <dbReference type="ChEBI" id="CHEBI:456215"/>
    </reaction>
</comment>
<comment type="pathway">
    <text evidence="1">Cofactor biosynthesis; thiamine diphosphate biosynthesis.</text>
</comment>
<comment type="subcellular location">
    <subcellularLocation>
        <location evidence="1">Cytoplasm</location>
    </subcellularLocation>
</comment>
<comment type="similarity">
    <text evidence="1">Belongs to the ThiI family.</text>
</comment>
<name>THII_SALG2</name>
<protein>
    <recommendedName>
        <fullName evidence="1">tRNA sulfurtransferase</fullName>
        <ecNumber evidence="1">2.8.1.4</ecNumber>
    </recommendedName>
    <alternativeName>
        <fullName evidence="1">Sulfur carrier protein ThiS sulfurtransferase</fullName>
    </alternativeName>
    <alternativeName>
        <fullName evidence="1">Thiamine biosynthesis protein ThiI</fullName>
    </alternativeName>
    <alternativeName>
        <fullName evidence="1">tRNA 4-thiouridine synthase</fullName>
    </alternativeName>
</protein>
<organism>
    <name type="scientific">Salmonella gallinarum (strain 287/91 / NCTC 13346)</name>
    <dbReference type="NCBI Taxonomy" id="550538"/>
    <lineage>
        <taxon>Bacteria</taxon>
        <taxon>Pseudomonadati</taxon>
        <taxon>Pseudomonadota</taxon>
        <taxon>Gammaproteobacteria</taxon>
        <taxon>Enterobacterales</taxon>
        <taxon>Enterobacteriaceae</taxon>
        <taxon>Salmonella</taxon>
    </lineage>
</organism>
<feature type="chain" id="PRO_1000090030" description="tRNA sulfurtransferase">
    <location>
        <begin position="1"/>
        <end position="482"/>
    </location>
</feature>
<feature type="domain" description="THUMP" evidence="1">
    <location>
        <begin position="61"/>
        <end position="165"/>
    </location>
</feature>
<feature type="domain" description="Rhodanese" evidence="1">
    <location>
        <begin position="404"/>
        <end position="482"/>
    </location>
</feature>
<feature type="active site" description="Cysteine persulfide intermediate" evidence="1">
    <location>
        <position position="456"/>
    </location>
</feature>
<feature type="binding site" evidence="1">
    <location>
        <begin position="183"/>
        <end position="184"/>
    </location>
    <ligand>
        <name>ATP</name>
        <dbReference type="ChEBI" id="CHEBI:30616"/>
    </ligand>
</feature>
<feature type="binding site" evidence="1">
    <location>
        <position position="265"/>
    </location>
    <ligand>
        <name>ATP</name>
        <dbReference type="ChEBI" id="CHEBI:30616"/>
    </ligand>
</feature>
<feature type="binding site" evidence="1">
    <location>
        <position position="287"/>
    </location>
    <ligand>
        <name>ATP</name>
        <dbReference type="ChEBI" id="CHEBI:30616"/>
    </ligand>
</feature>
<feature type="binding site" evidence="1">
    <location>
        <position position="296"/>
    </location>
    <ligand>
        <name>ATP</name>
        <dbReference type="ChEBI" id="CHEBI:30616"/>
    </ligand>
</feature>
<feature type="disulfide bond" description="Redox-active" evidence="1">
    <location>
        <begin position="344"/>
        <end position="456"/>
    </location>
</feature>